<protein>
    <recommendedName>
        <fullName evidence="1">Na(+)-translocating NADH-quinone reductase subunit E</fullName>
        <shortName evidence="1">Na(+)-NQR subunit E</shortName>
        <shortName evidence="1">Na(+)-translocating NQR subunit E</shortName>
        <ecNumber evidence="1">7.2.1.1</ecNumber>
    </recommendedName>
    <alternativeName>
        <fullName evidence="1">NQR complex subunit E</fullName>
    </alternativeName>
    <alternativeName>
        <fullName evidence="1">NQR-1 subunit E</fullName>
    </alternativeName>
</protein>
<dbReference type="EC" id="7.2.1.1" evidence="1"/>
<dbReference type="EMBL" id="CP000746">
    <property type="protein sequence ID" value="ABR73977.1"/>
    <property type="molecule type" value="Genomic_DNA"/>
</dbReference>
<dbReference type="RefSeq" id="WP_012072357.1">
    <property type="nucleotide sequence ID" value="NC_009655.1"/>
</dbReference>
<dbReference type="SMR" id="A6VLY0"/>
<dbReference type="STRING" id="339671.Asuc_0603"/>
<dbReference type="KEGG" id="asu:Asuc_0603"/>
<dbReference type="eggNOG" id="COG2209">
    <property type="taxonomic scope" value="Bacteria"/>
</dbReference>
<dbReference type="HOGENOM" id="CLU_095255_0_0_6"/>
<dbReference type="OrthoDB" id="9803631at2"/>
<dbReference type="Proteomes" id="UP000001114">
    <property type="component" value="Chromosome"/>
</dbReference>
<dbReference type="GO" id="GO:0009276">
    <property type="term" value="C:Gram-negative-bacterium-type cell wall"/>
    <property type="evidence" value="ECO:0007669"/>
    <property type="project" value="InterPro"/>
</dbReference>
<dbReference type="GO" id="GO:0005886">
    <property type="term" value="C:plasma membrane"/>
    <property type="evidence" value="ECO:0007669"/>
    <property type="project" value="UniProtKB-SubCell"/>
</dbReference>
<dbReference type="GO" id="GO:0016655">
    <property type="term" value="F:oxidoreductase activity, acting on NAD(P)H, quinone or similar compound as acceptor"/>
    <property type="evidence" value="ECO:0007669"/>
    <property type="project" value="UniProtKB-UniRule"/>
</dbReference>
<dbReference type="GO" id="GO:0022904">
    <property type="term" value="P:respiratory electron transport chain"/>
    <property type="evidence" value="ECO:0007669"/>
    <property type="project" value="InterPro"/>
</dbReference>
<dbReference type="GO" id="GO:0006814">
    <property type="term" value="P:sodium ion transport"/>
    <property type="evidence" value="ECO:0007669"/>
    <property type="project" value="UniProtKB-UniRule"/>
</dbReference>
<dbReference type="HAMAP" id="MF_00429">
    <property type="entry name" value="NqrE"/>
    <property type="match status" value="1"/>
</dbReference>
<dbReference type="InterPro" id="IPR003667">
    <property type="entry name" value="NqrDE/RnfAE"/>
</dbReference>
<dbReference type="InterPro" id="IPR050133">
    <property type="entry name" value="NqrDE/RnfAE_oxidrdctase"/>
</dbReference>
<dbReference type="InterPro" id="IPR010967">
    <property type="entry name" value="NqrE"/>
</dbReference>
<dbReference type="NCBIfam" id="TIGR01940">
    <property type="entry name" value="nqrE"/>
    <property type="match status" value="1"/>
</dbReference>
<dbReference type="PANTHER" id="PTHR30335">
    <property type="entry name" value="INTEGRAL MEMBRANE PROTEIN OF SOXR-REDUCING COMPLEX"/>
    <property type="match status" value="1"/>
</dbReference>
<dbReference type="PANTHER" id="PTHR30335:SF1">
    <property type="entry name" value="NA(+)-TRANSLOCATING NADH-QUINONE REDUCTASE SUBUNIT E"/>
    <property type="match status" value="1"/>
</dbReference>
<dbReference type="Pfam" id="PF02508">
    <property type="entry name" value="Rnf-Nqr"/>
    <property type="match status" value="1"/>
</dbReference>
<dbReference type="PIRSF" id="PIRSF006102">
    <property type="entry name" value="NQR_DE"/>
    <property type="match status" value="1"/>
</dbReference>
<name>NQRE_ACTSZ</name>
<organism>
    <name type="scientific">Actinobacillus succinogenes (strain ATCC 55618 / DSM 22257 / CCUG 43843 / 130Z)</name>
    <dbReference type="NCBI Taxonomy" id="339671"/>
    <lineage>
        <taxon>Bacteria</taxon>
        <taxon>Pseudomonadati</taxon>
        <taxon>Pseudomonadota</taxon>
        <taxon>Gammaproteobacteria</taxon>
        <taxon>Pasteurellales</taxon>
        <taxon>Pasteurellaceae</taxon>
        <taxon>Actinobacillus</taxon>
    </lineage>
</organism>
<reference key="1">
    <citation type="journal article" date="2010" name="BMC Genomics">
        <title>A genomic perspective on the potential of Actinobacillus succinogenes for industrial succinate production.</title>
        <authorList>
            <person name="McKinlay J.B."/>
            <person name="Laivenieks M."/>
            <person name="Schindler B.D."/>
            <person name="McKinlay A.A."/>
            <person name="Siddaramappa S."/>
            <person name="Challacombe J.F."/>
            <person name="Lowry S.R."/>
            <person name="Clum A."/>
            <person name="Lapidus A.L."/>
            <person name="Burkhart K.B."/>
            <person name="Harkins V."/>
            <person name="Vieille C."/>
        </authorList>
    </citation>
    <scope>NUCLEOTIDE SEQUENCE [LARGE SCALE GENOMIC DNA]</scope>
    <source>
        <strain>ATCC 55618 / DSM 22257 / CCUG 43843 / 130Z</strain>
    </source>
</reference>
<gene>
    <name evidence="1" type="primary">nqrE</name>
    <name type="ordered locus">Asuc_0603</name>
</gene>
<evidence type="ECO:0000255" key="1">
    <source>
        <dbReference type="HAMAP-Rule" id="MF_00429"/>
    </source>
</evidence>
<proteinExistence type="inferred from homology"/>
<keyword id="KW-0997">Cell inner membrane</keyword>
<keyword id="KW-1003">Cell membrane</keyword>
<keyword id="KW-0406">Ion transport</keyword>
<keyword id="KW-0472">Membrane</keyword>
<keyword id="KW-0520">NAD</keyword>
<keyword id="KW-1185">Reference proteome</keyword>
<keyword id="KW-0915">Sodium</keyword>
<keyword id="KW-0739">Sodium transport</keyword>
<keyword id="KW-1278">Translocase</keyword>
<keyword id="KW-0812">Transmembrane</keyword>
<keyword id="KW-1133">Transmembrane helix</keyword>
<keyword id="KW-0813">Transport</keyword>
<keyword id="KW-0830">Ubiquinone</keyword>
<comment type="function">
    <text evidence="1">NQR complex catalyzes the reduction of ubiquinone-1 to ubiquinol by two successive reactions, coupled with the transport of Na(+) ions from the cytoplasm to the periplasm. NqrA to NqrE are probably involved in the second step, the conversion of ubisemiquinone to ubiquinol.</text>
</comment>
<comment type="catalytic activity">
    <reaction evidence="1">
        <text>a ubiquinone + n Na(+)(in) + NADH + H(+) = a ubiquinol + n Na(+)(out) + NAD(+)</text>
        <dbReference type="Rhea" id="RHEA:47748"/>
        <dbReference type="Rhea" id="RHEA-COMP:9565"/>
        <dbReference type="Rhea" id="RHEA-COMP:9566"/>
        <dbReference type="ChEBI" id="CHEBI:15378"/>
        <dbReference type="ChEBI" id="CHEBI:16389"/>
        <dbReference type="ChEBI" id="CHEBI:17976"/>
        <dbReference type="ChEBI" id="CHEBI:29101"/>
        <dbReference type="ChEBI" id="CHEBI:57540"/>
        <dbReference type="ChEBI" id="CHEBI:57945"/>
        <dbReference type="EC" id="7.2.1.1"/>
    </reaction>
</comment>
<comment type="subunit">
    <text evidence="1">Composed of six subunits; NqrA, NqrB, NqrC, NqrD, NqrE and NqrF.</text>
</comment>
<comment type="subcellular location">
    <subcellularLocation>
        <location evidence="1">Cell inner membrane</location>
        <topology evidence="1">Multi-pass membrane protein</topology>
    </subcellularLocation>
</comment>
<comment type="similarity">
    <text evidence="1">Belongs to the NqrDE/RnfAE family.</text>
</comment>
<sequence length="198" mass="21334">MEHYISLFVKSVFIENMALSFFLGMCTFLAVSKKVSTSFGLGIAVIVVLGIAVPVNQLVYTHILKENALVDGVDLSFLNFITFIGVIAALVQILEMFLDKFVPSLYSALGIFLPLITVNCAIFGGVSFMVQREYNFTESVVYGIGAGTGWMLAIVALAGLTEKMKYADVPAGLRGLGITFITVGLMALGFMSFSGIQL</sequence>
<accession>A6VLY0</accession>
<feature type="chain" id="PRO_1000072309" description="Na(+)-translocating NADH-quinone reductase subunit E">
    <location>
        <begin position="1"/>
        <end position="198"/>
    </location>
</feature>
<feature type="transmembrane region" description="Helical" evidence="1">
    <location>
        <begin position="11"/>
        <end position="31"/>
    </location>
</feature>
<feature type="transmembrane region" description="Helical" evidence="1">
    <location>
        <begin position="35"/>
        <end position="55"/>
    </location>
</feature>
<feature type="transmembrane region" description="Helical" evidence="1">
    <location>
        <begin position="77"/>
        <end position="97"/>
    </location>
</feature>
<feature type="transmembrane region" description="Helical" evidence="1">
    <location>
        <begin position="110"/>
        <end position="130"/>
    </location>
</feature>
<feature type="transmembrane region" description="Helical" evidence="1">
    <location>
        <begin position="140"/>
        <end position="160"/>
    </location>
</feature>
<feature type="transmembrane region" description="Helical" evidence="1">
    <location>
        <begin position="176"/>
        <end position="196"/>
    </location>
</feature>